<feature type="chain" id="PRO_1000022310" description="Potassium-transporting ATPase KdpC subunit">
    <location>
        <begin position="1"/>
        <end position="185"/>
    </location>
</feature>
<feature type="transmembrane region" description="Helical" evidence="1">
    <location>
        <begin position="14"/>
        <end position="34"/>
    </location>
</feature>
<feature type="region of interest" description="Disordered" evidence="2">
    <location>
        <begin position="105"/>
        <end position="128"/>
    </location>
</feature>
<proteinExistence type="inferred from homology"/>
<organism>
    <name type="scientific">Cereibacter sphaeroides (strain ATCC 17029 / ATH 2.4.9)</name>
    <name type="common">Rhodobacter sphaeroides</name>
    <dbReference type="NCBI Taxonomy" id="349101"/>
    <lineage>
        <taxon>Bacteria</taxon>
        <taxon>Pseudomonadati</taxon>
        <taxon>Pseudomonadota</taxon>
        <taxon>Alphaproteobacteria</taxon>
        <taxon>Rhodobacterales</taxon>
        <taxon>Paracoccaceae</taxon>
        <taxon>Cereibacter</taxon>
    </lineage>
</organism>
<gene>
    <name evidence="1" type="primary">kdpC</name>
    <name type="ordered locus">Rsph17029_2925</name>
</gene>
<protein>
    <recommendedName>
        <fullName evidence="1">Potassium-transporting ATPase KdpC subunit</fullName>
    </recommendedName>
    <alternativeName>
        <fullName evidence="1">ATP phosphohydrolase [potassium-transporting] C chain</fullName>
    </alternativeName>
    <alternativeName>
        <fullName evidence="1">Potassium-binding and translocating subunit C</fullName>
    </alternativeName>
    <alternativeName>
        <fullName evidence="1">Potassium-translocating ATPase C chain</fullName>
    </alternativeName>
</protein>
<reference key="1">
    <citation type="submission" date="2007-02" db="EMBL/GenBank/DDBJ databases">
        <title>Complete sequence of chromosome 1 of Rhodobacter sphaeroides ATCC 17029.</title>
        <authorList>
            <person name="Copeland A."/>
            <person name="Lucas S."/>
            <person name="Lapidus A."/>
            <person name="Barry K."/>
            <person name="Detter J.C."/>
            <person name="Glavina del Rio T."/>
            <person name="Hammon N."/>
            <person name="Israni S."/>
            <person name="Dalin E."/>
            <person name="Tice H."/>
            <person name="Pitluck S."/>
            <person name="Kiss H."/>
            <person name="Brettin T."/>
            <person name="Bruce D."/>
            <person name="Han C."/>
            <person name="Tapia R."/>
            <person name="Gilna P."/>
            <person name="Schmutz J."/>
            <person name="Larimer F."/>
            <person name="Land M."/>
            <person name="Hauser L."/>
            <person name="Kyrpides N."/>
            <person name="Mikhailova N."/>
            <person name="Richardson P."/>
            <person name="Mackenzie C."/>
            <person name="Choudhary M."/>
            <person name="Donohue T.J."/>
            <person name="Kaplan S."/>
        </authorList>
    </citation>
    <scope>NUCLEOTIDE SEQUENCE [LARGE SCALE GENOMIC DNA]</scope>
    <source>
        <strain>ATCC 17029 / ATH 2.4.9</strain>
    </source>
</reference>
<sequence>MMTHLRPALASLLALSLLTGVAYPLALTGIAAVIAPDRAAGSLILREGQVVGSALIGQGFDGPGYLHPRPSASDWNAAGTSASNLGPTSAALLAEVQERQAAYEAQNGAPAPVDAVTASGSGLDPHVSPANARAQAARIARARGLDEAAVRRLIEAHVEPPLLGLWGQARVNVLAVNLALDAAGA</sequence>
<evidence type="ECO:0000255" key="1">
    <source>
        <dbReference type="HAMAP-Rule" id="MF_00276"/>
    </source>
</evidence>
<evidence type="ECO:0000256" key="2">
    <source>
        <dbReference type="SAM" id="MobiDB-lite"/>
    </source>
</evidence>
<accession>A3PNW1</accession>
<dbReference type="EMBL" id="CP000577">
    <property type="protein sequence ID" value="ABN78027.1"/>
    <property type="molecule type" value="Genomic_DNA"/>
</dbReference>
<dbReference type="RefSeq" id="WP_011841972.1">
    <property type="nucleotide sequence ID" value="NC_009049.1"/>
</dbReference>
<dbReference type="SMR" id="A3PNW1"/>
<dbReference type="KEGG" id="rsh:Rsph17029_2925"/>
<dbReference type="HOGENOM" id="CLU_077094_2_0_5"/>
<dbReference type="GO" id="GO:0005886">
    <property type="term" value="C:plasma membrane"/>
    <property type="evidence" value="ECO:0007669"/>
    <property type="project" value="UniProtKB-SubCell"/>
</dbReference>
<dbReference type="GO" id="GO:0005524">
    <property type="term" value="F:ATP binding"/>
    <property type="evidence" value="ECO:0007669"/>
    <property type="project" value="UniProtKB-UniRule"/>
</dbReference>
<dbReference type="GO" id="GO:0008556">
    <property type="term" value="F:P-type potassium transmembrane transporter activity"/>
    <property type="evidence" value="ECO:0007669"/>
    <property type="project" value="InterPro"/>
</dbReference>
<dbReference type="HAMAP" id="MF_00276">
    <property type="entry name" value="KdpC"/>
    <property type="match status" value="1"/>
</dbReference>
<dbReference type="InterPro" id="IPR003820">
    <property type="entry name" value="KdpC"/>
</dbReference>
<dbReference type="NCBIfam" id="TIGR00681">
    <property type="entry name" value="kdpC"/>
    <property type="match status" value="1"/>
</dbReference>
<dbReference type="NCBIfam" id="NF001454">
    <property type="entry name" value="PRK00315.1"/>
    <property type="match status" value="1"/>
</dbReference>
<dbReference type="PANTHER" id="PTHR30042">
    <property type="entry name" value="POTASSIUM-TRANSPORTING ATPASE C CHAIN"/>
    <property type="match status" value="1"/>
</dbReference>
<dbReference type="PANTHER" id="PTHR30042:SF2">
    <property type="entry name" value="POTASSIUM-TRANSPORTING ATPASE KDPC SUBUNIT"/>
    <property type="match status" value="1"/>
</dbReference>
<dbReference type="Pfam" id="PF02669">
    <property type="entry name" value="KdpC"/>
    <property type="match status" value="1"/>
</dbReference>
<dbReference type="PIRSF" id="PIRSF001296">
    <property type="entry name" value="K_ATPase_KdpC"/>
    <property type="match status" value="1"/>
</dbReference>
<keyword id="KW-0067">ATP-binding</keyword>
<keyword id="KW-0997">Cell inner membrane</keyword>
<keyword id="KW-1003">Cell membrane</keyword>
<keyword id="KW-0406">Ion transport</keyword>
<keyword id="KW-0472">Membrane</keyword>
<keyword id="KW-0547">Nucleotide-binding</keyword>
<keyword id="KW-0630">Potassium</keyword>
<keyword id="KW-0633">Potassium transport</keyword>
<keyword id="KW-0812">Transmembrane</keyword>
<keyword id="KW-1133">Transmembrane helix</keyword>
<keyword id="KW-0813">Transport</keyword>
<comment type="function">
    <text evidence="1">Part of the high-affinity ATP-driven potassium transport (or Kdp) system, which catalyzes the hydrolysis of ATP coupled with the electrogenic transport of potassium into the cytoplasm. This subunit acts as a catalytic chaperone that increases the ATP-binding affinity of the ATP-hydrolyzing subunit KdpB by the formation of a transient KdpB/KdpC/ATP ternary complex.</text>
</comment>
<comment type="subunit">
    <text evidence="1">The system is composed of three essential subunits: KdpA, KdpB and KdpC.</text>
</comment>
<comment type="subcellular location">
    <subcellularLocation>
        <location evidence="1">Cell inner membrane</location>
        <topology evidence="1">Single-pass membrane protein</topology>
    </subcellularLocation>
</comment>
<comment type="similarity">
    <text evidence="1">Belongs to the KdpC family.</text>
</comment>
<name>KDPC_CERS1</name>